<sequence>MPTVNILSYFAFSVEAVLFPMSSELWEKGYREALGYGVEKICLYSFVLVLPIAILMA</sequence>
<evidence type="ECO:0000255" key="1"/>
<evidence type="ECO:0000305" key="2"/>
<proteinExistence type="predicted"/>
<dbReference type="EMBL" id="L77117">
    <property type="protein sequence ID" value="AAB99647.1"/>
    <property type="molecule type" value="Genomic_DNA"/>
</dbReference>
<dbReference type="PIR" id="D64502">
    <property type="entry name" value="D64502"/>
</dbReference>
<dbReference type="RefSeq" id="WP_010871146.1">
    <property type="nucleotide sequence ID" value="NC_000909.1"/>
</dbReference>
<dbReference type="SMR" id="Q59016"/>
<dbReference type="STRING" id="243232.MJ_1621"/>
<dbReference type="PaxDb" id="243232-MJ_1621"/>
<dbReference type="EnsemblBacteria" id="AAB99647">
    <property type="protein sequence ID" value="AAB99647"/>
    <property type="gene ID" value="MJ_1621"/>
</dbReference>
<dbReference type="GeneID" id="71696694"/>
<dbReference type="KEGG" id="mja:MJ_1621"/>
<dbReference type="eggNOG" id="arCOG02209">
    <property type="taxonomic scope" value="Archaea"/>
</dbReference>
<dbReference type="HOGENOM" id="CLU_2985688_0_0_2"/>
<dbReference type="InParanoid" id="Q59016"/>
<dbReference type="Proteomes" id="UP000000805">
    <property type="component" value="Chromosome"/>
</dbReference>
<dbReference type="GO" id="GO:0005886">
    <property type="term" value="C:plasma membrane"/>
    <property type="evidence" value="ECO:0007669"/>
    <property type="project" value="UniProtKB-SubCell"/>
</dbReference>
<name>Y1621_METJA</name>
<keyword id="KW-1003">Cell membrane</keyword>
<keyword id="KW-0472">Membrane</keyword>
<keyword id="KW-1185">Reference proteome</keyword>
<keyword id="KW-0812">Transmembrane</keyword>
<keyword id="KW-1133">Transmembrane helix</keyword>
<feature type="chain" id="PRO_0000107443" description="Uncharacterized protein MJ1621">
    <location>
        <begin position="1"/>
        <end position="57"/>
    </location>
</feature>
<feature type="transmembrane region" description="Helical" evidence="1">
    <location>
        <begin position="4"/>
        <end position="26"/>
    </location>
</feature>
<feature type="transmembrane region" description="Helical" evidence="1">
    <location>
        <begin position="33"/>
        <end position="55"/>
    </location>
</feature>
<gene>
    <name type="ordered locus">MJ1621</name>
</gene>
<comment type="subcellular location">
    <subcellularLocation>
        <location evidence="2">Cell membrane</location>
        <topology evidence="2">Multi-pass membrane protein</topology>
    </subcellularLocation>
</comment>
<protein>
    <recommendedName>
        <fullName>Uncharacterized protein MJ1621</fullName>
    </recommendedName>
</protein>
<organism>
    <name type="scientific">Methanocaldococcus jannaschii (strain ATCC 43067 / DSM 2661 / JAL-1 / JCM 10045 / NBRC 100440)</name>
    <name type="common">Methanococcus jannaschii</name>
    <dbReference type="NCBI Taxonomy" id="243232"/>
    <lineage>
        <taxon>Archaea</taxon>
        <taxon>Methanobacteriati</taxon>
        <taxon>Methanobacteriota</taxon>
        <taxon>Methanomada group</taxon>
        <taxon>Methanococci</taxon>
        <taxon>Methanococcales</taxon>
        <taxon>Methanocaldococcaceae</taxon>
        <taxon>Methanocaldococcus</taxon>
    </lineage>
</organism>
<accession>Q59016</accession>
<reference key="1">
    <citation type="journal article" date="1996" name="Science">
        <title>Complete genome sequence of the methanogenic archaeon, Methanococcus jannaschii.</title>
        <authorList>
            <person name="Bult C.J."/>
            <person name="White O."/>
            <person name="Olsen G.J."/>
            <person name="Zhou L."/>
            <person name="Fleischmann R.D."/>
            <person name="Sutton G.G."/>
            <person name="Blake J.A."/>
            <person name="FitzGerald L.M."/>
            <person name="Clayton R.A."/>
            <person name="Gocayne J.D."/>
            <person name="Kerlavage A.R."/>
            <person name="Dougherty B.A."/>
            <person name="Tomb J.-F."/>
            <person name="Adams M.D."/>
            <person name="Reich C.I."/>
            <person name="Overbeek R."/>
            <person name="Kirkness E.F."/>
            <person name="Weinstock K.G."/>
            <person name="Merrick J.M."/>
            <person name="Glodek A."/>
            <person name="Scott J.L."/>
            <person name="Geoghagen N.S.M."/>
            <person name="Weidman J.F."/>
            <person name="Fuhrmann J.L."/>
            <person name="Nguyen D."/>
            <person name="Utterback T.R."/>
            <person name="Kelley J.M."/>
            <person name="Peterson J.D."/>
            <person name="Sadow P.W."/>
            <person name="Hanna M.C."/>
            <person name="Cotton M.D."/>
            <person name="Roberts K.M."/>
            <person name="Hurst M.A."/>
            <person name="Kaine B.P."/>
            <person name="Borodovsky M."/>
            <person name="Klenk H.-P."/>
            <person name="Fraser C.M."/>
            <person name="Smith H.O."/>
            <person name="Woese C.R."/>
            <person name="Venter J.C."/>
        </authorList>
    </citation>
    <scope>NUCLEOTIDE SEQUENCE [LARGE SCALE GENOMIC DNA]</scope>
    <source>
        <strain>ATCC 43067 / DSM 2661 / JAL-1 / JCM 10045 / NBRC 100440</strain>
    </source>
</reference>